<reference key="1">
    <citation type="journal article" date="2001" name="Science">
        <title>Comparative genomics of Listeria species.</title>
        <authorList>
            <person name="Glaser P."/>
            <person name="Frangeul L."/>
            <person name="Buchrieser C."/>
            <person name="Rusniok C."/>
            <person name="Amend A."/>
            <person name="Baquero F."/>
            <person name="Berche P."/>
            <person name="Bloecker H."/>
            <person name="Brandt P."/>
            <person name="Chakraborty T."/>
            <person name="Charbit A."/>
            <person name="Chetouani F."/>
            <person name="Couve E."/>
            <person name="de Daruvar A."/>
            <person name="Dehoux P."/>
            <person name="Domann E."/>
            <person name="Dominguez-Bernal G."/>
            <person name="Duchaud E."/>
            <person name="Durant L."/>
            <person name="Dussurget O."/>
            <person name="Entian K.-D."/>
            <person name="Fsihi H."/>
            <person name="Garcia-del Portillo F."/>
            <person name="Garrido P."/>
            <person name="Gautier L."/>
            <person name="Goebel W."/>
            <person name="Gomez-Lopez N."/>
            <person name="Hain T."/>
            <person name="Hauf J."/>
            <person name="Jackson D."/>
            <person name="Jones L.-M."/>
            <person name="Kaerst U."/>
            <person name="Kreft J."/>
            <person name="Kuhn M."/>
            <person name="Kunst F."/>
            <person name="Kurapkat G."/>
            <person name="Madueno E."/>
            <person name="Maitournam A."/>
            <person name="Mata Vicente J."/>
            <person name="Ng E."/>
            <person name="Nedjari H."/>
            <person name="Nordsiek G."/>
            <person name="Novella S."/>
            <person name="de Pablos B."/>
            <person name="Perez-Diaz J.-C."/>
            <person name="Purcell R."/>
            <person name="Remmel B."/>
            <person name="Rose M."/>
            <person name="Schlueter T."/>
            <person name="Simoes N."/>
            <person name="Tierrez A."/>
            <person name="Vazquez-Boland J.-A."/>
            <person name="Voss H."/>
            <person name="Wehland J."/>
            <person name="Cossart P."/>
        </authorList>
    </citation>
    <scope>NUCLEOTIDE SEQUENCE [LARGE SCALE GENOMIC DNA]</scope>
    <source>
        <strain>ATCC BAA-679 / EGD-e</strain>
    </source>
</reference>
<proteinExistence type="inferred from homology"/>
<keyword id="KW-0067">ATP-binding</keyword>
<keyword id="KW-0963">Cytoplasm</keyword>
<keyword id="KW-0275">Fatty acid biosynthesis</keyword>
<keyword id="KW-0276">Fatty acid metabolism</keyword>
<keyword id="KW-0444">Lipid biosynthesis</keyword>
<keyword id="KW-0443">Lipid metabolism</keyword>
<keyword id="KW-0547">Nucleotide-binding</keyword>
<keyword id="KW-1185">Reference proteome</keyword>
<keyword id="KW-0808">Transferase</keyword>
<name>ACCA_LISMO</name>
<feature type="chain" id="PRO_0000223783" description="Acetyl-coenzyme A carboxylase carboxyl transferase subunit alpha">
    <location>
        <begin position="1"/>
        <end position="318"/>
    </location>
</feature>
<feature type="domain" description="CoA carboxyltransferase C-terminal" evidence="2">
    <location>
        <begin position="38"/>
        <end position="292"/>
    </location>
</feature>
<dbReference type="EC" id="2.1.3.15" evidence="1"/>
<dbReference type="EMBL" id="AL591979">
    <property type="protein sequence ID" value="CAC99650.1"/>
    <property type="molecule type" value="Genomic_DNA"/>
</dbReference>
<dbReference type="PIR" id="AD1271">
    <property type="entry name" value="AD1271"/>
</dbReference>
<dbReference type="RefSeq" id="NP_465097.1">
    <property type="nucleotide sequence ID" value="NC_003210.1"/>
</dbReference>
<dbReference type="RefSeq" id="WP_009931204.1">
    <property type="nucleotide sequence ID" value="NZ_CP149495.1"/>
</dbReference>
<dbReference type="SMR" id="Q8Y6V9"/>
<dbReference type="STRING" id="169963.gene:17594229"/>
<dbReference type="PaxDb" id="169963-lmo1572"/>
<dbReference type="EnsemblBacteria" id="CAC99650">
    <property type="protein sequence ID" value="CAC99650"/>
    <property type="gene ID" value="CAC99650"/>
</dbReference>
<dbReference type="GeneID" id="986992"/>
<dbReference type="KEGG" id="lmo:lmo1572"/>
<dbReference type="PATRIC" id="fig|169963.11.peg.1613"/>
<dbReference type="eggNOG" id="COG0825">
    <property type="taxonomic scope" value="Bacteria"/>
</dbReference>
<dbReference type="HOGENOM" id="CLU_015486_0_2_9"/>
<dbReference type="OrthoDB" id="9808023at2"/>
<dbReference type="PhylomeDB" id="Q8Y6V9"/>
<dbReference type="BioCyc" id="LMON169963:LMO1572-MONOMER"/>
<dbReference type="UniPathway" id="UPA00655">
    <property type="reaction ID" value="UER00711"/>
</dbReference>
<dbReference type="Proteomes" id="UP000000817">
    <property type="component" value="Chromosome"/>
</dbReference>
<dbReference type="GO" id="GO:0009317">
    <property type="term" value="C:acetyl-CoA carboxylase complex"/>
    <property type="evidence" value="ECO:0007669"/>
    <property type="project" value="InterPro"/>
</dbReference>
<dbReference type="GO" id="GO:0003989">
    <property type="term" value="F:acetyl-CoA carboxylase activity"/>
    <property type="evidence" value="ECO:0007669"/>
    <property type="project" value="InterPro"/>
</dbReference>
<dbReference type="GO" id="GO:0005524">
    <property type="term" value="F:ATP binding"/>
    <property type="evidence" value="ECO:0007669"/>
    <property type="project" value="UniProtKB-KW"/>
</dbReference>
<dbReference type="GO" id="GO:0016743">
    <property type="term" value="F:carboxyl- or carbamoyltransferase activity"/>
    <property type="evidence" value="ECO:0007669"/>
    <property type="project" value="UniProtKB-UniRule"/>
</dbReference>
<dbReference type="GO" id="GO:0006633">
    <property type="term" value="P:fatty acid biosynthetic process"/>
    <property type="evidence" value="ECO:0007669"/>
    <property type="project" value="UniProtKB-KW"/>
</dbReference>
<dbReference type="GO" id="GO:2001295">
    <property type="term" value="P:malonyl-CoA biosynthetic process"/>
    <property type="evidence" value="ECO:0007669"/>
    <property type="project" value="UniProtKB-UniRule"/>
</dbReference>
<dbReference type="Gene3D" id="3.90.226.10">
    <property type="entry name" value="2-enoyl-CoA Hydratase, Chain A, domain 1"/>
    <property type="match status" value="1"/>
</dbReference>
<dbReference type="HAMAP" id="MF_00823">
    <property type="entry name" value="AcetylCoA_CT_alpha"/>
    <property type="match status" value="1"/>
</dbReference>
<dbReference type="InterPro" id="IPR001095">
    <property type="entry name" value="Acetyl_CoA_COase_a_su"/>
</dbReference>
<dbReference type="InterPro" id="IPR029045">
    <property type="entry name" value="ClpP/crotonase-like_dom_sf"/>
</dbReference>
<dbReference type="InterPro" id="IPR011763">
    <property type="entry name" value="COA_CT_C"/>
</dbReference>
<dbReference type="NCBIfam" id="TIGR00513">
    <property type="entry name" value="accA"/>
    <property type="match status" value="1"/>
</dbReference>
<dbReference type="NCBIfam" id="NF041504">
    <property type="entry name" value="AccA_sub"/>
    <property type="match status" value="1"/>
</dbReference>
<dbReference type="NCBIfam" id="NF004344">
    <property type="entry name" value="PRK05724.1"/>
    <property type="match status" value="1"/>
</dbReference>
<dbReference type="PANTHER" id="PTHR42853">
    <property type="entry name" value="ACETYL-COENZYME A CARBOXYLASE CARBOXYL TRANSFERASE SUBUNIT ALPHA"/>
    <property type="match status" value="1"/>
</dbReference>
<dbReference type="PANTHER" id="PTHR42853:SF3">
    <property type="entry name" value="ACETYL-COENZYME A CARBOXYLASE CARBOXYL TRANSFERASE SUBUNIT ALPHA, CHLOROPLASTIC"/>
    <property type="match status" value="1"/>
</dbReference>
<dbReference type="Pfam" id="PF03255">
    <property type="entry name" value="ACCA"/>
    <property type="match status" value="1"/>
</dbReference>
<dbReference type="PRINTS" id="PR01069">
    <property type="entry name" value="ACCCTRFRASEA"/>
</dbReference>
<dbReference type="SUPFAM" id="SSF52096">
    <property type="entry name" value="ClpP/crotonase"/>
    <property type="match status" value="1"/>
</dbReference>
<dbReference type="PROSITE" id="PS50989">
    <property type="entry name" value="COA_CT_CTER"/>
    <property type="match status" value="1"/>
</dbReference>
<organism>
    <name type="scientific">Listeria monocytogenes serovar 1/2a (strain ATCC BAA-679 / EGD-e)</name>
    <dbReference type="NCBI Taxonomy" id="169963"/>
    <lineage>
        <taxon>Bacteria</taxon>
        <taxon>Bacillati</taxon>
        <taxon>Bacillota</taxon>
        <taxon>Bacilli</taxon>
        <taxon>Bacillales</taxon>
        <taxon>Listeriaceae</taxon>
        <taxon>Listeria</taxon>
    </lineage>
</organism>
<gene>
    <name evidence="1" type="primary">accA</name>
    <name type="ordered locus">lmo1572</name>
</gene>
<sequence length="318" mass="35269">MANEMEFEKPILELKSKIADLKEYNETSDVDLTNEIEKLEKRLAKLESSIYSNMTAWDKFQVARHPERPTTLDYISLLFEDFMELHGDRTFGDDAAIVGGIATFKGIPVTVIGHQRGKDTKDNLHRNFGMPHPEGFRKALRLMKQADKFGRPIICFIDTKGAYPGRAAEERGQSEAIARNLYEMSDMKVPIISIVIGEGGSGGALALGVGNQIFMLENAVFSVISPEGAAAILWKDASLAKKAAESMRITAGDLFELGITDGIIPEVKGGAHRDLTAQAEEINKTITKSLHALMAFSEEQLIKQRYEKFKKIGVYETI</sequence>
<protein>
    <recommendedName>
        <fullName evidence="1">Acetyl-coenzyme A carboxylase carboxyl transferase subunit alpha</fullName>
        <shortName evidence="1">ACCase subunit alpha</shortName>
        <shortName evidence="1">Acetyl-CoA carboxylase carboxyltransferase subunit alpha</shortName>
        <ecNumber evidence="1">2.1.3.15</ecNumber>
    </recommendedName>
</protein>
<comment type="function">
    <text evidence="1">Component of the acetyl coenzyme A carboxylase (ACC) complex. First, biotin carboxylase catalyzes the carboxylation of biotin on its carrier protein (BCCP) and then the CO(2) group is transferred by the carboxyltransferase to acetyl-CoA to form malonyl-CoA.</text>
</comment>
<comment type="catalytic activity">
    <reaction evidence="1">
        <text>N(6)-carboxybiotinyl-L-lysyl-[protein] + acetyl-CoA = N(6)-biotinyl-L-lysyl-[protein] + malonyl-CoA</text>
        <dbReference type="Rhea" id="RHEA:54728"/>
        <dbReference type="Rhea" id="RHEA-COMP:10505"/>
        <dbReference type="Rhea" id="RHEA-COMP:10506"/>
        <dbReference type="ChEBI" id="CHEBI:57288"/>
        <dbReference type="ChEBI" id="CHEBI:57384"/>
        <dbReference type="ChEBI" id="CHEBI:83144"/>
        <dbReference type="ChEBI" id="CHEBI:83145"/>
        <dbReference type="EC" id="2.1.3.15"/>
    </reaction>
</comment>
<comment type="pathway">
    <text evidence="1">Lipid metabolism; malonyl-CoA biosynthesis; malonyl-CoA from acetyl-CoA: step 1/1.</text>
</comment>
<comment type="subunit">
    <text evidence="1">Acetyl-CoA carboxylase is a heterohexamer composed of biotin carboxyl carrier protein (AccB), biotin carboxylase (AccC) and two subunits each of ACCase subunit alpha (AccA) and ACCase subunit beta (AccD).</text>
</comment>
<comment type="subcellular location">
    <subcellularLocation>
        <location evidence="1">Cytoplasm</location>
    </subcellularLocation>
</comment>
<comment type="similarity">
    <text evidence="1">Belongs to the AccA family.</text>
</comment>
<accession>Q8Y6V9</accession>
<evidence type="ECO:0000255" key="1">
    <source>
        <dbReference type="HAMAP-Rule" id="MF_00823"/>
    </source>
</evidence>
<evidence type="ECO:0000255" key="2">
    <source>
        <dbReference type="PROSITE-ProRule" id="PRU01137"/>
    </source>
</evidence>